<proteinExistence type="inferred from homology"/>
<evidence type="ECO:0000255" key="1">
    <source>
        <dbReference type="HAMAP-Rule" id="MF_01246"/>
    </source>
</evidence>
<sequence length="245" mass="27302">MKIIFNADDFGISPGAVYGILESYKRGVVKSTTLLANSPAFDLAVEVAKENPGLDIGAHLTLTFGSPVLQGLETLTDDDGRFRRNYTALENGLADVDMNEVERELTAQIEKILDAGITISHFDTHHSIEPLIYPVQHKLAEKYGVSIRRHSDVSDFGAIKTPDLFATEFYADGVSFETIKKLVQEHIGTNDVVEVMTHPAYIDETLREISSYVEPRIKEVSILTSRELQAYLGQQEVEIISFRDL</sequence>
<keyword id="KW-0119">Carbohydrate metabolism</keyword>
<keyword id="KW-0378">Hydrolase</keyword>
<keyword id="KW-0460">Magnesium</keyword>
<keyword id="KW-0479">Metal-binding</keyword>
<reference key="1">
    <citation type="journal article" date="2011" name="J. Bacteriol.">
        <title>Genome sequence of lineage III Listeria monocytogenes strain HCC23.</title>
        <authorList>
            <person name="Steele C.L."/>
            <person name="Donaldson J.R."/>
            <person name="Paul D."/>
            <person name="Banes M.M."/>
            <person name="Arick T."/>
            <person name="Bridges S.M."/>
            <person name="Lawrence M.L."/>
        </authorList>
    </citation>
    <scope>NUCLEOTIDE SEQUENCE [LARGE SCALE GENOMIC DNA]</scope>
    <source>
        <strain>HCC23</strain>
    </source>
</reference>
<dbReference type="EC" id="3.5.1.-" evidence="1"/>
<dbReference type="EMBL" id="CP001175">
    <property type="protein sequence ID" value="ACK40787.1"/>
    <property type="molecule type" value="Genomic_DNA"/>
</dbReference>
<dbReference type="RefSeq" id="WP_003740180.1">
    <property type="nucleotide sequence ID" value="NC_011660.1"/>
</dbReference>
<dbReference type="SMR" id="B8DGN4"/>
<dbReference type="KEGG" id="lmh:LMHCC_2452"/>
<dbReference type="HOGENOM" id="CLU_064244_4_0_9"/>
<dbReference type="GO" id="GO:0019213">
    <property type="term" value="F:deacetylase activity"/>
    <property type="evidence" value="ECO:0007669"/>
    <property type="project" value="TreeGrafter"/>
</dbReference>
<dbReference type="GO" id="GO:0016811">
    <property type="term" value="F:hydrolase activity, acting on carbon-nitrogen (but not peptide) bonds, in linear amides"/>
    <property type="evidence" value="ECO:0007669"/>
    <property type="project" value="UniProtKB-UniRule"/>
</dbReference>
<dbReference type="GO" id="GO:0046872">
    <property type="term" value="F:metal ion binding"/>
    <property type="evidence" value="ECO:0007669"/>
    <property type="project" value="UniProtKB-KW"/>
</dbReference>
<dbReference type="GO" id="GO:0000272">
    <property type="term" value="P:polysaccharide catabolic process"/>
    <property type="evidence" value="ECO:0007669"/>
    <property type="project" value="InterPro"/>
</dbReference>
<dbReference type="CDD" id="cd10803">
    <property type="entry name" value="YdjC_EF3048_like"/>
    <property type="match status" value="1"/>
</dbReference>
<dbReference type="FunFam" id="3.20.20.370:FF:000010">
    <property type="entry name" value="Carbohydrate deacetylase"/>
    <property type="match status" value="1"/>
</dbReference>
<dbReference type="Gene3D" id="3.20.20.370">
    <property type="entry name" value="Glycoside hydrolase/deacetylase"/>
    <property type="match status" value="1"/>
</dbReference>
<dbReference type="HAMAP" id="MF_01246">
    <property type="entry name" value="COD"/>
    <property type="match status" value="1"/>
</dbReference>
<dbReference type="InterPro" id="IPR022948">
    <property type="entry name" value="COD_ChbG_bac"/>
</dbReference>
<dbReference type="InterPro" id="IPR011330">
    <property type="entry name" value="Glyco_hydro/deAcase_b/a-brl"/>
</dbReference>
<dbReference type="InterPro" id="IPR006879">
    <property type="entry name" value="YdjC-like"/>
</dbReference>
<dbReference type="NCBIfam" id="NF002559">
    <property type="entry name" value="PRK02134.1"/>
    <property type="match status" value="1"/>
</dbReference>
<dbReference type="PANTHER" id="PTHR31609:SF1">
    <property type="entry name" value="CARBOHYDRATE DEACETYLASE"/>
    <property type="match status" value="1"/>
</dbReference>
<dbReference type="PANTHER" id="PTHR31609">
    <property type="entry name" value="YDJC DEACETYLASE FAMILY MEMBER"/>
    <property type="match status" value="1"/>
</dbReference>
<dbReference type="Pfam" id="PF04794">
    <property type="entry name" value="YdjC"/>
    <property type="match status" value="1"/>
</dbReference>
<dbReference type="SUPFAM" id="SSF88713">
    <property type="entry name" value="Glycoside hydrolase/deacetylase"/>
    <property type="match status" value="1"/>
</dbReference>
<feature type="chain" id="PRO_1000165048" description="Carbohydrate deacetylase">
    <location>
        <begin position="1"/>
        <end position="245"/>
    </location>
</feature>
<feature type="binding site" evidence="1">
    <location>
        <position position="59"/>
    </location>
    <ligand>
        <name>Mg(2+)</name>
        <dbReference type="ChEBI" id="CHEBI:18420"/>
    </ligand>
</feature>
<feature type="binding site" evidence="1">
    <location>
        <position position="125"/>
    </location>
    <ligand>
        <name>Mg(2+)</name>
        <dbReference type="ChEBI" id="CHEBI:18420"/>
    </ligand>
</feature>
<organism>
    <name type="scientific">Listeria monocytogenes serotype 4a (strain HCC23)</name>
    <dbReference type="NCBI Taxonomy" id="552536"/>
    <lineage>
        <taxon>Bacteria</taxon>
        <taxon>Bacillati</taxon>
        <taxon>Bacillota</taxon>
        <taxon>Bacilli</taxon>
        <taxon>Bacillales</taxon>
        <taxon>Listeriaceae</taxon>
        <taxon>Listeria</taxon>
    </lineage>
</organism>
<comment type="function">
    <text evidence="1">Probably catalyzes the deacetylation of acetylated carbohydrates an important step in the degradation of oligosaccharides.</text>
</comment>
<comment type="cofactor">
    <cofactor evidence="1">
        <name>Mg(2+)</name>
        <dbReference type="ChEBI" id="CHEBI:18420"/>
    </cofactor>
</comment>
<comment type="subunit">
    <text evidence="1">Homodimer.</text>
</comment>
<comment type="similarity">
    <text evidence="1">Belongs to the YdjC deacetylase family.</text>
</comment>
<gene>
    <name type="ordered locus">LMHCC_2452</name>
</gene>
<name>YDJC_LISMH</name>
<accession>B8DGN4</accession>
<protein>
    <recommendedName>
        <fullName evidence="1">Carbohydrate deacetylase</fullName>
        <ecNumber evidence="1">3.5.1.-</ecNumber>
    </recommendedName>
</protein>